<comment type="function">
    <text evidence="1">ATPase subunit of a proteasome-like degradation complex; this subunit has chaperone activity. The binding of ATP and its subsequent hydrolysis by HslU are essential for unfolding of protein substrates subsequently hydrolyzed by HslV. HslU recognizes the N-terminal part of its protein substrates and unfolds these before they are guided to HslV for hydrolysis.</text>
</comment>
<comment type="subunit">
    <text evidence="1">A double ring-shaped homohexamer of HslV is capped on each side by a ring-shaped HslU homohexamer. The assembly of the HslU/HslV complex is dependent on binding of ATP.</text>
</comment>
<comment type="subcellular location">
    <subcellularLocation>
        <location evidence="1">Cytoplasm</location>
    </subcellularLocation>
</comment>
<comment type="similarity">
    <text evidence="1">Belongs to the ClpX chaperone family. HslU subfamily.</text>
</comment>
<gene>
    <name evidence="1" type="primary">hslU</name>
    <name type="ordered locus">Rru_A3600</name>
</gene>
<protein>
    <recommendedName>
        <fullName evidence="1">ATP-dependent protease ATPase subunit HslU</fullName>
    </recommendedName>
    <alternativeName>
        <fullName evidence="1">Unfoldase HslU</fullName>
    </alternativeName>
</protein>
<dbReference type="EMBL" id="CP000230">
    <property type="protein sequence ID" value="ABC24394.1"/>
    <property type="molecule type" value="Genomic_DNA"/>
</dbReference>
<dbReference type="RefSeq" id="WP_011391347.1">
    <property type="nucleotide sequence ID" value="NC_007643.1"/>
</dbReference>
<dbReference type="RefSeq" id="YP_428681.1">
    <property type="nucleotide sequence ID" value="NC_007643.1"/>
</dbReference>
<dbReference type="SMR" id="Q2RNA1"/>
<dbReference type="STRING" id="269796.Rru_A3600"/>
<dbReference type="EnsemblBacteria" id="ABC24394">
    <property type="protein sequence ID" value="ABC24394"/>
    <property type="gene ID" value="Rru_A3600"/>
</dbReference>
<dbReference type="KEGG" id="rru:Rru_A3600"/>
<dbReference type="PATRIC" id="fig|269796.9.peg.3721"/>
<dbReference type="eggNOG" id="COG1220">
    <property type="taxonomic scope" value="Bacteria"/>
</dbReference>
<dbReference type="HOGENOM" id="CLU_033123_0_0_5"/>
<dbReference type="PhylomeDB" id="Q2RNA1"/>
<dbReference type="Proteomes" id="UP000001929">
    <property type="component" value="Chromosome"/>
</dbReference>
<dbReference type="GO" id="GO:0009376">
    <property type="term" value="C:HslUV protease complex"/>
    <property type="evidence" value="ECO:0007669"/>
    <property type="project" value="UniProtKB-UniRule"/>
</dbReference>
<dbReference type="GO" id="GO:0005524">
    <property type="term" value="F:ATP binding"/>
    <property type="evidence" value="ECO:0007669"/>
    <property type="project" value="UniProtKB-UniRule"/>
</dbReference>
<dbReference type="GO" id="GO:0016887">
    <property type="term" value="F:ATP hydrolysis activity"/>
    <property type="evidence" value="ECO:0007669"/>
    <property type="project" value="InterPro"/>
</dbReference>
<dbReference type="GO" id="GO:0008233">
    <property type="term" value="F:peptidase activity"/>
    <property type="evidence" value="ECO:0007669"/>
    <property type="project" value="InterPro"/>
</dbReference>
<dbReference type="GO" id="GO:0036402">
    <property type="term" value="F:proteasome-activating activity"/>
    <property type="evidence" value="ECO:0007669"/>
    <property type="project" value="UniProtKB-UniRule"/>
</dbReference>
<dbReference type="GO" id="GO:0043335">
    <property type="term" value="P:protein unfolding"/>
    <property type="evidence" value="ECO:0007669"/>
    <property type="project" value="UniProtKB-UniRule"/>
</dbReference>
<dbReference type="GO" id="GO:0051603">
    <property type="term" value="P:proteolysis involved in protein catabolic process"/>
    <property type="evidence" value="ECO:0007669"/>
    <property type="project" value="TreeGrafter"/>
</dbReference>
<dbReference type="CDD" id="cd19498">
    <property type="entry name" value="RecA-like_HslU"/>
    <property type="match status" value="1"/>
</dbReference>
<dbReference type="FunFam" id="3.40.50.300:FF:000213">
    <property type="entry name" value="ATP-dependent protease ATPase subunit HslU"/>
    <property type="match status" value="1"/>
</dbReference>
<dbReference type="FunFam" id="3.40.50.300:FF:000220">
    <property type="entry name" value="ATP-dependent protease ATPase subunit HslU"/>
    <property type="match status" value="1"/>
</dbReference>
<dbReference type="Gene3D" id="1.10.8.60">
    <property type="match status" value="1"/>
</dbReference>
<dbReference type="Gene3D" id="1.10.8.10">
    <property type="entry name" value="DNA helicase RuvA subunit, C-terminal domain"/>
    <property type="match status" value="1"/>
</dbReference>
<dbReference type="Gene3D" id="3.40.50.300">
    <property type="entry name" value="P-loop containing nucleotide triphosphate hydrolases"/>
    <property type="match status" value="1"/>
</dbReference>
<dbReference type="HAMAP" id="MF_00249">
    <property type="entry name" value="HslU"/>
    <property type="match status" value="1"/>
</dbReference>
<dbReference type="InterPro" id="IPR003593">
    <property type="entry name" value="AAA+_ATPase"/>
</dbReference>
<dbReference type="InterPro" id="IPR050052">
    <property type="entry name" value="ATP-dep_Clp_protease_ClpX"/>
</dbReference>
<dbReference type="InterPro" id="IPR003959">
    <property type="entry name" value="ATPase_AAA_core"/>
</dbReference>
<dbReference type="InterPro" id="IPR019489">
    <property type="entry name" value="Clp_ATPase_C"/>
</dbReference>
<dbReference type="InterPro" id="IPR004491">
    <property type="entry name" value="HslU"/>
</dbReference>
<dbReference type="InterPro" id="IPR027417">
    <property type="entry name" value="P-loop_NTPase"/>
</dbReference>
<dbReference type="NCBIfam" id="TIGR00390">
    <property type="entry name" value="hslU"/>
    <property type="match status" value="1"/>
</dbReference>
<dbReference type="NCBIfam" id="NF003544">
    <property type="entry name" value="PRK05201.1"/>
    <property type="match status" value="1"/>
</dbReference>
<dbReference type="PANTHER" id="PTHR48102">
    <property type="entry name" value="ATP-DEPENDENT CLP PROTEASE ATP-BINDING SUBUNIT CLPX-LIKE, MITOCHONDRIAL-RELATED"/>
    <property type="match status" value="1"/>
</dbReference>
<dbReference type="PANTHER" id="PTHR48102:SF3">
    <property type="entry name" value="ATP-DEPENDENT PROTEASE ATPASE SUBUNIT HSLU"/>
    <property type="match status" value="1"/>
</dbReference>
<dbReference type="Pfam" id="PF00004">
    <property type="entry name" value="AAA"/>
    <property type="match status" value="1"/>
</dbReference>
<dbReference type="Pfam" id="PF07724">
    <property type="entry name" value="AAA_2"/>
    <property type="match status" value="1"/>
</dbReference>
<dbReference type="SMART" id="SM00382">
    <property type="entry name" value="AAA"/>
    <property type="match status" value="1"/>
</dbReference>
<dbReference type="SMART" id="SM01086">
    <property type="entry name" value="ClpB_D2-small"/>
    <property type="match status" value="1"/>
</dbReference>
<dbReference type="SUPFAM" id="SSF52540">
    <property type="entry name" value="P-loop containing nucleoside triphosphate hydrolases"/>
    <property type="match status" value="1"/>
</dbReference>
<feature type="chain" id="PRO_1000012790" description="ATP-dependent protease ATPase subunit HslU">
    <location>
        <begin position="1"/>
        <end position="435"/>
    </location>
</feature>
<feature type="binding site" evidence="1">
    <location>
        <position position="18"/>
    </location>
    <ligand>
        <name>ATP</name>
        <dbReference type="ChEBI" id="CHEBI:30616"/>
    </ligand>
</feature>
<feature type="binding site" evidence="1">
    <location>
        <begin position="60"/>
        <end position="65"/>
    </location>
    <ligand>
        <name>ATP</name>
        <dbReference type="ChEBI" id="CHEBI:30616"/>
    </ligand>
</feature>
<feature type="binding site" evidence="1">
    <location>
        <position position="248"/>
    </location>
    <ligand>
        <name>ATP</name>
        <dbReference type="ChEBI" id="CHEBI:30616"/>
    </ligand>
</feature>
<feature type="binding site" evidence="1">
    <location>
        <position position="313"/>
    </location>
    <ligand>
        <name>ATP</name>
        <dbReference type="ChEBI" id="CHEBI:30616"/>
    </ligand>
</feature>
<feature type="binding site" evidence="1">
    <location>
        <position position="385"/>
    </location>
    <ligand>
        <name>ATP</name>
        <dbReference type="ChEBI" id="CHEBI:30616"/>
    </ligand>
</feature>
<accession>Q2RNA1</accession>
<name>HSLU_RHORT</name>
<reference key="1">
    <citation type="journal article" date="2011" name="Stand. Genomic Sci.">
        <title>Complete genome sequence of Rhodospirillum rubrum type strain (S1).</title>
        <authorList>
            <person name="Munk A.C."/>
            <person name="Copeland A."/>
            <person name="Lucas S."/>
            <person name="Lapidus A."/>
            <person name="Del Rio T.G."/>
            <person name="Barry K."/>
            <person name="Detter J.C."/>
            <person name="Hammon N."/>
            <person name="Israni S."/>
            <person name="Pitluck S."/>
            <person name="Brettin T."/>
            <person name="Bruce D."/>
            <person name="Han C."/>
            <person name="Tapia R."/>
            <person name="Gilna P."/>
            <person name="Schmutz J."/>
            <person name="Larimer F."/>
            <person name="Land M."/>
            <person name="Kyrpides N.C."/>
            <person name="Mavromatis K."/>
            <person name="Richardson P."/>
            <person name="Rohde M."/>
            <person name="Goeker M."/>
            <person name="Klenk H.P."/>
            <person name="Zhang Y."/>
            <person name="Roberts G.P."/>
            <person name="Reslewic S."/>
            <person name="Schwartz D.C."/>
        </authorList>
    </citation>
    <scope>NUCLEOTIDE SEQUENCE [LARGE SCALE GENOMIC DNA]</scope>
    <source>
        <strain>ATCC 11170 / ATH 1.1.1 / DSM 467 / LMG 4362 / NCIMB 8255 / S1</strain>
    </source>
</reference>
<proteinExistence type="inferred from homology"/>
<evidence type="ECO:0000255" key="1">
    <source>
        <dbReference type="HAMAP-Rule" id="MF_00249"/>
    </source>
</evidence>
<sequence length="435" mass="47982">MNAFTPREIVSELDRHIVGQKDAKRAVAIALRNRWRRQQLSEALRDEVLPKNILMIGPTGVGKTEIARRLAKLAQAPFLKVEATKFTEVGYVGRDVESIIRDLVETALTQERDRLRKQVNAKAEANAEERVLDALVGDRASPETRQKFRKMLREGQINDKEIEVQVQDSGGALPTMDIPGMPGAQMGMLNLNDIFGKAFGNRTKARKMTVEDSHAVLVREEADKLLDEEQVVKAAIAAVENNGIVFLDEIDKIATASERRGGDVSREGVQRDLLPLIEGTTVSTKYGPVKTDHVLFIASGAFHTAKPADLLPELQGRLPIRVELSALNAGDFKRILLEPEASLITQYKALLATEGVTLEFPDDTVEAIAEIATEINGSVENIGARRLHTVLERLLEEISFTATDRSGETIVVTRDMVKERVGALAAKADLSRFIL</sequence>
<keyword id="KW-0067">ATP-binding</keyword>
<keyword id="KW-0143">Chaperone</keyword>
<keyword id="KW-0963">Cytoplasm</keyword>
<keyword id="KW-0547">Nucleotide-binding</keyword>
<keyword id="KW-1185">Reference proteome</keyword>
<keyword id="KW-0346">Stress response</keyword>
<organism>
    <name type="scientific">Rhodospirillum rubrum (strain ATCC 11170 / ATH 1.1.1 / DSM 467 / LMG 4362 / NCIMB 8255 / S1)</name>
    <dbReference type="NCBI Taxonomy" id="269796"/>
    <lineage>
        <taxon>Bacteria</taxon>
        <taxon>Pseudomonadati</taxon>
        <taxon>Pseudomonadota</taxon>
        <taxon>Alphaproteobacteria</taxon>
        <taxon>Rhodospirillales</taxon>
        <taxon>Rhodospirillaceae</taxon>
        <taxon>Rhodospirillum</taxon>
    </lineage>
</organism>